<proteinExistence type="inferred from homology"/>
<reference key="1">
    <citation type="submission" date="2007-07" db="EMBL/GenBank/DDBJ databases">
        <title>Genome sequence of Campylobacter curvus 525.92 isolated from human feces.</title>
        <authorList>
            <person name="Fouts D.E."/>
            <person name="Mongodin E.F."/>
            <person name="Puiu D."/>
            <person name="Sebastian Y."/>
            <person name="Miller W.G."/>
            <person name="Mandrell R.E."/>
            <person name="Lastovica A.J."/>
            <person name="Nelson K.E."/>
        </authorList>
    </citation>
    <scope>NUCLEOTIDE SEQUENCE [LARGE SCALE GENOMIC DNA]</scope>
    <source>
        <strain>525.92</strain>
    </source>
</reference>
<accession>A7GZ96</accession>
<gene>
    <name evidence="1" type="primary">smpB</name>
    <name type="ordered locus">Ccur92_12340</name>
    <name type="ORF">CCV52592_0695</name>
</gene>
<feature type="chain" id="PRO_1000002023" description="SsrA-binding protein">
    <location>
        <begin position="1"/>
        <end position="150"/>
    </location>
</feature>
<protein>
    <recommendedName>
        <fullName evidence="1">SsrA-binding protein</fullName>
    </recommendedName>
    <alternativeName>
        <fullName evidence="1">Small protein B</fullName>
    </alternativeName>
</protein>
<comment type="function">
    <text evidence="1">Required for rescue of stalled ribosomes mediated by trans-translation. Binds to transfer-messenger RNA (tmRNA), required for stable association of tmRNA with ribosomes. tmRNA and SmpB together mimic tRNA shape, replacing the anticodon stem-loop with SmpB. tmRNA is encoded by the ssrA gene; the 2 termini fold to resemble tRNA(Ala) and it encodes a 'tag peptide', a short internal open reading frame. During trans-translation Ala-aminoacylated tmRNA acts like a tRNA, entering the A-site of stalled ribosomes, displacing the stalled mRNA. The ribosome then switches to translate the ORF on the tmRNA; the nascent peptide is terminated with the 'tag peptide' encoded by the tmRNA and targeted for degradation. The ribosome is freed to recommence translation, which seems to be the essential function of trans-translation.</text>
</comment>
<comment type="subcellular location">
    <subcellularLocation>
        <location evidence="1">Cytoplasm</location>
    </subcellularLocation>
    <text evidence="1">The tmRNA-SmpB complex associates with stalled 70S ribosomes.</text>
</comment>
<comment type="similarity">
    <text evidence="1">Belongs to the SmpB family.</text>
</comment>
<name>SSRP_CAMC5</name>
<dbReference type="EMBL" id="CP000767">
    <property type="protein sequence ID" value="EAU00430.1"/>
    <property type="molecule type" value="Genomic_DNA"/>
</dbReference>
<dbReference type="RefSeq" id="WP_011992468.1">
    <property type="nucleotide sequence ID" value="NC_009715.2"/>
</dbReference>
<dbReference type="SMR" id="A7GZ96"/>
<dbReference type="STRING" id="360105.CCV52592_0695"/>
<dbReference type="KEGG" id="ccv:CCV52592_0695"/>
<dbReference type="HOGENOM" id="CLU_108953_3_1_7"/>
<dbReference type="OrthoDB" id="9805462at2"/>
<dbReference type="Proteomes" id="UP000006380">
    <property type="component" value="Chromosome"/>
</dbReference>
<dbReference type="GO" id="GO:0005829">
    <property type="term" value="C:cytosol"/>
    <property type="evidence" value="ECO:0007669"/>
    <property type="project" value="TreeGrafter"/>
</dbReference>
<dbReference type="GO" id="GO:0003723">
    <property type="term" value="F:RNA binding"/>
    <property type="evidence" value="ECO:0007669"/>
    <property type="project" value="UniProtKB-UniRule"/>
</dbReference>
<dbReference type="GO" id="GO:0070929">
    <property type="term" value="P:trans-translation"/>
    <property type="evidence" value="ECO:0007669"/>
    <property type="project" value="UniProtKB-UniRule"/>
</dbReference>
<dbReference type="CDD" id="cd09294">
    <property type="entry name" value="SmpB"/>
    <property type="match status" value="1"/>
</dbReference>
<dbReference type="Gene3D" id="2.40.280.10">
    <property type="match status" value="1"/>
</dbReference>
<dbReference type="HAMAP" id="MF_00023">
    <property type="entry name" value="SmpB"/>
    <property type="match status" value="1"/>
</dbReference>
<dbReference type="InterPro" id="IPR023620">
    <property type="entry name" value="SmpB"/>
</dbReference>
<dbReference type="InterPro" id="IPR000037">
    <property type="entry name" value="SsrA-bd_prot"/>
</dbReference>
<dbReference type="InterPro" id="IPR020081">
    <property type="entry name" value="SsrA-bd_prot_CS"/>
</dbReference>
<dbReference type="NCBIfam" id="NF003843">
    <property type="entry name" value="PRK05422.1"/>
    <property type="match status" value="1"/>
</dbReference>
<dbReference type="NCBIfam" id="TIGR00086">
    <property type="entry name" value="smpB"/>
    <property type="match status" value="1"/>
</dbReference>
<dbReference type="PANTHER" id="PTHR30308:SF2">
    <property type="entry name" value="SSRA-BINDING PROTEIN"/>
    <property type="match status" value="1"/>
</dbReference>
<dbReference type="PANTHER" id="PTHR30308">
    <property type="entry name" value="TMRNA-BINDING COMPONENT OF TRANS-TRANSLATION TAGGING COMPLEX"/>
    <property type="match status" value="1"/>
</dbReference>
<dbReference type="Pfam" id="PF01668">
    <property type="entry name" value="SmpB"/>
    <property type="match status" value="1"/>
</dbReference>
<dbReference type="SUPFAM" id="SSF74982">
    <property type="entry name" value="Small protein B (SmpB)"/>
    <property type="match status" value="1"/>
</dbReference>
<dbReference type="PROSITE" id="PS01317">
    <property type="entry name" value="SSRP"/>
    <property type="match status" value="1"/>
</dbReference>
<organism>
    <name type="scientific">Campylobacter curvus (strain 525.92)</name>
    <dbReference type="NCBI Taxonomy" id="360105"/>
    <lineage>
        <taxon>Bacteria</taxon>
        <taxon>Pseudomonadati</taxon>
        <taxon>Campylobacterota</taxon>
        <taxon>Epsilonproteobacteria</taxon>
        <taxon>Campylobacterales</taxon>
        <taxon>Campylobacteraceae</taxon>
        <taxon>Campylobacter</taxon>
    </lineage>
</organism>
<sequence>MKDLAKNKKALHDFSILETFEAGVVLKGSEVKALRAGRANLKDSFVRIIKGEIFLLNAHISHLDTTNSHFRPDERAPRKLLMHRKQIDKLFGSVTKDGLTMVALALYLNDKNIIKARVALAKGKNLHDKRETLKKREADMEARAAMKKFI</sequence>
<keyword id="KW-0963">Cytoplasm</keyword>
<keyword id="KW-1185">Reference proteome</keyword>
<keyword id="KW-0694">RNA-binding</keyword>
<evidence type="ECO:0000255" key="1">
    <source>
        <dbReference type="HAMAP-Rule" id="MF_00023"/>
    </source>
</evidence>